<feature type="chain" id="PRO_0000303222" description="Uncharacterized protein MW0850">
    <location>
        <begin position="1"/>
        <end position="300"/>
    </location>
</feature>
<feature type="binding site" evidence="1">
    <location>
        <position position="146"/>
    </location>
    <ligand>
        <name>a divalent metal cation</name>
        <dbReference type="ChEBI" id="CHEBI:60240"/>
    </ligand>
</feature>
<feature type="binding site" evidence="1">
    <location>
        <position position="148"/>
    </location>
    <ligand>
        <name>a divalent metal cation</name>
        <dbReference type="ChEBI" id="CHEBI:60240"/>
    </ligand>
</feature>
<feature type="binding site" evidence="1">
    <location>
        <position position="177"/>
    </location>
    <ligand>
        <name>a divalent metal cation</name>
        <dbReference type="ChEBI" id="CHEBI:60240"/>
    </ligand>
</feature>
<accession>Q7A1B6</accession>
<protein>
    <recommendedName>
        <fullName>Uncharacterized protein MW0850</fullName>
    </recommendedName>
</protein>
<gene>
    <name type="ordered locus">MW0850</name>
</gene>
<keyword id="KW-0479">Metal-binding</keyword>
<dbReference type="EMBL" id="BA000033">
    <property type="protein sequence ID" value="BAB94715.1"/>
    <property type="molecule type" value="Genomic_DNA"/>
</dbReference>
<dbReference type="RefSeq" id="WP_000670752.1">
    <property type="nucleotide sequence ID" value="NC_003923.1"/>
</dbReference>
<dbReference type="SMR" id="Q7A1B6"/>
<dbReference type="KEGG" id="sam:MW0850"/>
<dbReference type="HOGENOM" id="CLU_028458_3_1_9"/>
<dbReference type="GO" id="GO:0018773">
    <property type="term" value="F:acetylpyruvate hydrolase activity"/>
    <property type="evidence" value="ECO:0007669"/>
    <property type="project" value="TreeGrafter"/>
</dbReference>
<dbReference type="GO" id="GO:0046872">
    <property type="term" value="F:metal ion binding"/>
    <property type="evidence" value="ECO:0007669"/>
    <property type="project" value="UniProtKB-KW"/>
</dbReference>
<dbReference type="FunFam" id="3.90.850.10:FF:000010">
    <property type="entry name" value="FAA hydrolase family protein"/>
    <property type="match status" value="1"/>
</dbReference>
<dbReference type="Gene3D" id="3.90.850.10">
    <property type="entry name" value="Fumarylacetoacetase-like, C-terminal domain"/>
    <property type="match status" value="1"/>
</dbReference>
<dbReference type="InterPro" id="IPR011234">
    <property type="entry name" value="Fumarylacetoacetase-like_C"/>
</dbReference>
<dbReference type="InterPro" id="IPR036663">
    <property type="entry name" value="Fumarylacetoacetase_C_sf"/>
</dbReference>
<dbReference type="PANTHER" id="PTHR11820">
    <property type="entry name" value="ACYLPYRUVASE"/>
    <property type="match status" value="1"/>
</dbReference>
<dbReference type="PANTHER" id="PTHR11820:SF7">
    <property type="entry name" value="ACYLPYRUVASE FAHD1, MITOCHONDRIAL"/>
    <property type="match status" value="1"/>
</dbReference>
<dbReference type="Pfam" id="PF01557">
    <property type="entry name" value="FAA_hydrolase"/>
    <property type="match status" value="1"/>
</dbReference>
<dbReference type="SUPFAM" id="SSF56529">
    <property type="entry name" value="FAH"/>
    <property type="match status" value="1"/>
</dbReference>
<comment type="similarity">
    <text evidence="2">Belongs to the FAH family.</text>
</comment>
<name>Y850_STAAW</name>
<proteinExistence type="inferred from homology"/>
<evidence type="ECO:0000250" key="1"/>
<evidence type="ECO:0000305" key="2"/>
<organism>
    <name type="scientific">Staphylococcus aureus (strain MW2)</name>
    <dbReference type="NCBI Taxonomy" id="196620"/>
    <lineage>
        <taxon>Bacteria</taxon>
        <taxon>Bacillati</taxon>
        <taxon>Bacillota</taxon>
        <taxon>Bacilli</taxon>
        <taxon>Bacillales</taxon>
        <taxon>Staphylococcaceae</taxon>
        <taxon>Staphylococcus</taxon>
    </lineage>
</organism>
<sequence length="300" mass="33113">MKFLSFKYNDKTSYGVKVKREDAVWDLTQVFADFAEGDFHPKTLLAGLQQNHTLDFQEQVRKAVVAAEDSGKAEDYKISFNDIEFLPPVTPPNNVIAFGRNYKDHANELNHEVEKLYVFTKAASSLTGDNATIPNHKDITDQLDYEGELGIVIGKSGEKIPKALALDYVYGYTIINDITDRKAQSEQDQAFLSKSLTGGCPMGPYIVTKDELPLPENVNIVTKVNNEIRQDGNTGEMILKIDELIEEISKYVALHPGDIIATGTPAGVGAGMQPPKFLQPGDEVKVTIDNIGTLTTYIAK</sequence>
<reference key="1">
    <citation type="journal article" date="2002" name="Lancet">
        <title>Genome and virulence determinants of high virulence community-acquired MRSA.</title>
        <authorList>
            <person name="Baba T."/>
            <person name="Takeuchi F."/>
            <person name="Kuroda M."/>
            <person name="Yuzawa H."/>
            <person name="Aoki K."/>
            <person name="Oguchi A."/>
            <person name="Nagai Y."/>
            <person name="Iwama N."/>
            <person name="Asano K."/>
            <person name="Naimi T."/>
            <person name="Kuroda H."/>
            <person name="Cui L."/>
            <person name="Yamamoto K."/>
            <person name="Hiramatsu K."/>
        </authorList>
    </citation>
    <scope>NUCLEOTIDE SEQUENCE [LARGE SCALE GENOMIC DNA]</scope>
    <source>
        <strain>MW2</strain>
    </source>
</reference>